<reference key="1">
    <citation type="submission" date="2016-11" db="EMBL/GenBank/DDBJ databases">
        <title>Genome sequencing of bacteria contributing to the geochemical cycling of arsenic, bromine, and iodine.</title>
        <authorList>
            <person name="Harada M."/>
            <person name="Ito K."/>
            <person name="Nakajima N."/>
            <person name="Yamamura S."/>
            <person name="Tomita M."/>
            <person name="Suzuki H."/>
            <person name="Amachi S."/>
        </authorList>
    </citation>
    <scope>NUCLEOTIDE SEQUENCE [LARGE SCALE GENOMIC DNA]</scope>
    <source>
        <strain>SCT</strain>
    </source>
</reference>
<reference key="2">
    <citation type="journal article" date="2020" name="Environ. Microbiol.">
        <title>A novel dimethylsulfoxide reductase family of molybdenum enzyme, Idr, is involved in iodate respiration by Pseudomonas sp. SCT.</title>
        <authorList>
            <person name="Yamazaki C."/>
            <person name="Kashiwa S."/>
            <person name="Horiuchi A."/>
            <person name="Kasahara Y."/>
            <person name="Yamamura S."/>
            <person name="Amachi S."/>
        </authorList>
    </citation>
    <scope>IDENTIFICATION BY MASS SPECTROMETRY</scope>
    <scope>FUNCTION</scope>
    <scope>SUBUNIT</scope>
    <scope>SUBCELLULAR LOCATION</scope>
    <scope>INDUCTION</scope>
    <source>
        <strain>SCT</strain>
    </source>
</reference>
<accession>A0A391NGM7</accession>
<keyword id="KW-0349">Heme</keyword>
<keyword id="KW-0408">Iron</keyword>
<keyword id="KW-0479">Metal-binding</keyword>
<keyword id="KW-0560">Oxidoreductase</keyword>
<keyword id="KW-0574">Periplasm</keyword>
<keyword id="KW-0677">Repeat</keyword>
<keyword id="KW-0732">Signal</keyword>
<evidence type="ECO:0000250" key="1">
    <source>
        <dbReference type="UniProtKB" id="P14532"/>
    </source>
</evidence>
<evidence type="ECO:0000255" key="2"/>
<evidence type="ECO:0000255" key="3">
    <source>
        <dbReference type="PROSITE-ProRule" id="PRU00433"/>
    </source>
</evidence>
<evidence type="ECO:0000269" key="4">
    <source>
    </source>
</evidence>
<evidence type="ECO:0000303" key="5">
    <source>
    </source>
</evidence>
<evidence type="ECO:0000305" key="6"/>
<evidence type="ECO:0000305" key="7">
    <source>
    </source>
</evidence>
<evidence type="ECO:0000312" key="8">
    <source>
        <dbReference type="EMBL" id="GCA58263.1"/>
    </source>
</evidence>
<feature type="signal peptide" evidence="2">
    <location>
        <begin position="1"/>
        <end position="24"/>
    </location>
</feature>
<feature type="chain" id="PRO_5017320034" description="Cytochrome-c peroxidase IdrP1" evidence="2">
    <location>
        <begin position="25"/>
        <end position="379"/>
    </location>
</feature>
<feature type="domain" description="Cytochrome c 1" evidence="3">
    <location>
        <begin position="50"/>
        <end position="158"/>
    </location>
</feature>
<feature type="domain" description="Cytochrome c 2" evidence="3">
    <location>
        <begin position="204"/>
        <end position="355"/>
    </location>
</feature>
<feature type="binding site" description="covalent" evidence="3">
    <location>
        <position position="72"/>
    </location>
    <ligand>
        <name>heme c</name>
        <dbReference type="ChEBI" id="CHEBI:61717"/>
        <label>1</label>
    </ligand>
</feature>
<feature type="binding site" description="covalent" evidence="3">
    <location>
        <position position="75"/>
    </location>
    <ligand>
        <name>heme c</name>
        <dbReference type="ChEBI" id="CHEBI:61717"/>
        <label>1</label>
    </ligand>
</feature>
<feature type="binding site" description="axial binding residue" evidence="3">
    <location>
        <position position="76"/>
    </location>
    <ligand>
        <name>heme c</name>
        <dbReference type="ChEBI" id="CHEBI:61717"/>
        <label>1</label>
    </ligand>
    <ligandPart>
        <name>Fe</name>
        <dbReference type="ChEBI" id="CHEBI:18248"/>
    </ligandPart>
</feature>
<feature type="binding site" description="covalent" evidence="3">
    <location>
        <position position="219"/>
    </location>
    <ligand>
        <name>heme c</name>
        <dbReference type="ChEBI" id="CHEBI:61717"/>
        <label>2</label>
    </ligand>
</feature>
<feature type="binding site" description="covalent" evidence="3">
    <location>
        <position position="222"/>
    </location>
    <ligand>
        <name>heme c</name>
        <dbReference type="ChEBI" id="CHEBI:61717"/>
        <label>2</label>
    </ligand>
</feature>
<feature type="binding site" description="axial binding residue" evidence="3">
    <location>
        <position position="223"/>
    </location>
    <ligand>
        <name>heme c</name>
        <dbReference type="ChEBI" id="CHEBI:61717"/>
        <label>2</label>
    </ligand>
    <ligandPart>
        <name>Fe</name>
        <dbReference type="ChEBI" id="CHEBI:18248"/>
    </ligandPart>
</feature>
<name>IDRP1_PSEXS</name>
<gene>
    <name evidence="5" type="primary">idrP1</name>
    <name evidence="8" type="ORF">PSCT_04483</name>
</gene>
<comment type="function">
    <text evidence="4">Involved in iodate respiration (PubMed:32190953). Probably reduces the H(2)O(2) produced by IdrA/IdrB to H(2)O, using a reduced cytochrome c as the electron donor (PubMed:32190953).</text>
</comment>
<comment type="catalytic activity">
    <reaction evidence="7">
        <text>2 Fe(II)-[cytochrome c] + H2O2 + 2 H(+) = 2 Fe(III)-[cytochrome c] + 2 H2O</text>
        <dbReference type="Rhea" id="RHEA:16581"/>
        <dbReference type="Rhea" id="RHEA-COMP:10350"/>
        <dbReference type="Rhea" id="RHEA-COMP:14399"/>
        <dbReference type="ChEBI" id="CHEBI:15377"/>
        <dbReference type="ChEBI" id="CHEBI:15378"/>
        <dbReference type="ChEBI" id="CHEBI:16240"/>
        <dbReference type="ChEBI" id="CHEBI:29033"/>
        <dbReference type="ChEBI" id="CHEBI:29034"/>
        <dbReference type="EC" id="1.11.1.5"/>
    </reaction>
</comment>
<comment type="cofactor">
    <cofactor evidence="1">
        <name>heme c</name>
        <dbReference type="ChEBI" id="CHEBI:61717"/>
    </cofactor>
    <text evidence="1">Binds 2 heme c groups.</text>
</comment>
<comment type="subunit">
    <text evidence="4">The iodate reductase (Idr) complex is composed of a molybdopterin-dependent iodate reductase (IdrA and IdrB subunits) and two associated peroxidases (IdrP1 and IdrP2).</text>
</comment>
<comment type="subcellular location">
    <subcellularLocation>
        <location evidence="4">Periplasm</location>
    </subcellularLocation>
</comment>
<comment type="induction">
    <text evidence="4">Abundantly expressed under iodate-respiring conditions.</text>
</comment>
<organism>
    <name type="scientific">Pseudomonas sp. (strain SCT)</name>
    <dbReference type="NCBI Taxonomy" id="412955"/>
    <lineage>
        <taxon>Bacteria</taxon>
        <taxon>Pseudomonadati</taxon>
        <taxon>Pseudomonadota</taxon>
        <taxon>Gammaproteobacteria</taxon>
        <taxon>Pseudomonadales</taxon>
        <taxon>Pseudomonadaceae</taxon>
        <taxon>Pseudomonas</taxon>
    </lineage>
</organism>
<proteinExistence type="evidence at protein level"/>
<protein>
    <recommendedName>
        <fullName evidence="6">Cytochrome-c peroxidase IdrP1</fullName>
        <ecNumber evidence="7">1.11.1.5</ecNumber>
    </recommendedName>
    <alternativeName>
        <fullName evidence="6">Iodate reductase subunit IdrP1</fullName>
    </alternativeName>
</protein>
<sequence length="379" mass="41822">MNNRKPLQLSLLVASLAVAFTASATNADAHPPLAPLPPVPVPKDNPQSAEKIALGKQLFWDYRLSGDGSMPCVSCHLPALGWGDGGQISRGYPGTKHWRNSQTILNSAYYNKLFWEGSVNSLEEQAPSAAEGAVAGNGDPSVMEMRLRFVPEYVDAFKNVFGSQWPRMNDAYRAIASYQRTVVSDASKVPFDRYANGDKNALDTSQKRGMALFNGKAGCVQCHNGPLASDQKYYDLGLPDFAGFVDDPLYQVTHRWEHYQKGVSEPRYRAANMDYGLYYVTKNPKDVGKFRTPSLREAKYTAPYMHNGVFTSLQEVVDFYDRGGGSGTSKSELLKPLKLAAQEKQDLIAFIEALSMSEPLLHDDPTLPGEYQPLPAPIK</sequence>
<dbReference type="EC" id="1.11.1.5" evidence="7"/>
<dbReference type="EMBL" id="BDJA01000015">
    <property type="protein sequence ID" value="GCA58263.1"/>
    <property type="molecule type" value="Genomic_DNA"/>
</dbReference>
<dbReference type="RefSeq" id="WP_125025139.1">
    <property type="nucleotide sequence ID" value="NZ_BDJA01000015.1"/>
</dbReference>
<dbReference type="SMR" id="A0A391NGM7"/>
<dbReference type="OrthoDB" id="9805202at2"/>
<dbReference type="Proteomes" id="UP000268673">
    <property type="component" value="Unassembled WGS sequence"/>
</dbReference>
<dbReference type="GO" id="GO:0042597">
    <property type="term" value="C:periplasmic space"/>
    <property type="evidence" value="ECO:0007669"/>
    <property type="project" value="UniProtKB-SubCell"/>
</dbReference>
<dbReference type="GO" id="GO:0004130">
    <property type="term" value="F:cytochrome-c peroxidase activity"/>
    <property type="evidence" value="ECO:0007669"/>
    <property type="project" value="TreeGrafter"/>
</dbReference>
<dbReference type="GO" id="GO:0009055">
    <property type="term" value="F:electron transfer activity"/>
    <property type="evidence" value="ECO:0007669"/>
    <property type="project" value="InterPro"/>
</dbReference>
<dbReference type="GO" id="GO:0020037">
    <property type="term" value="F:heme binding"/>
    <property type="evidence" value="ECO:0007669"/>
    <property type="project" value="InterPro"/>
</dbReference>
<dbReference type="GO" id="GO:0046872">
    <property type="term" value="F:metal ion binding"/>
    <property type="evidence" value="ECO:0007669"/>
    <property type="project" value="UniProtKB-KW"/>
</dbReference>
<dbReference type="Gene3D" id="1.10.760.10">
    <property type="entry name" value="Cytochrome c-like domain"/>
    <property type="match status" value="2"/>
</dbReference>
<dbReference type="InterPro" id="IPR009056">
    <property type="entry name" value="Cyt_c-like_dom"/>
</dbReference>
<dbReference type="InterPro" id="IPR036909">
    <property type="entry name" value="Cyt_c-like_dom_sf"/>
</dbReference>
<dbReference type="InterPro" id="IPR051395">
    <property type="entry name" value="Cytochrome_c_Peroxidase/MauG"/>
</dbReference>
<dbReference type="InterPro" id="IPR004852">
    <property type="entry name" value="Di-haem_cyt_c_peroxidsae"/>
</dbReference>
<dbReference type="InterPro" id="IPR026259">
    <property type="entry name" value="MauG/Cytc_peroxidase"/>
</dbReference>
<dbReference type="PANTHER" id="PTHR30600:SF10">
    <property type="entry name" value="BLL6722 PROTEIN"/>
    <property type="match status" value="1"/>
</dbReference>
<dbReference type="PANTHER" id="PTHR30600">
    <property type="entry name" value="CYTOCHROME C PEROXIDASE-RELATED"/>
    <property type="match status" value="1"/>
</dbReference>
<dbReference type="Pfam" id="PF03150">
    <property type="entry name" value="CCP_MauG"/>
    <property type="match status" value="1"/>
</dbReference>
<dbReference type="PIRSF" id="PIRSF000294">
    <property type="entry name" value="Cytochrome-c_peroxidase"/>
    <property type="match status" value="1"/>
</dbReference>
<dbReference type="SUPFAM" id="SSF46626">
    <property type="entry name" value="Cytochrome c"/>
    <property type="match status" value="2"/>
</dbReference>
<dbReference type="PROSITE" id="PS51007">
    <property type="entry name" value="CYTC"/>
    <property type="match status" value="2"/>
</dbReference>